<sequence length="98" mass="11437">MIFVITIKMNCLNHEVFYLLQEAASKAENDGKNLYIYPQGNNFSAGADLKLLLSYIEDKNFHDLENLLKLGQQTMLHLKYSSVHVISLWSWCGTWRWI</sequence>
<comment type="caution">
    <text evidence="1">Could be the product of a pseudogene. It corresponds to positions 451 to 491 of the complete orthologous and probably active protein in R.felis (RF_0890).</text>
</comment>
<gene>
    <name type="ordered locus">RC0838</name>
</gene>
<evidence type="ECO:0000305" key="1"/>
<feature type="chain" id="PRO_0000284428" description="Putative uncharacterized protein RC0838">
    <location>
        <begin position="1"/>
        <end position="98"/>
    </location>
</feature>
<organism>
    <name type="scientific">Rickettsia conorii (strain ATCC VR-613 / Malish 7)</name>
    <dbReference type="NCBI Taxonomy" id="272944"/>
    <lineage>
        <taxon>Bacteria</taxon>
        <taxon>Pseudomonadati</taxon>
        <taxon>Pseudomonadota</taxon>
        <taxon>Alphaproteobacteria</taxon>
        <taxon>Rickettsiales</taxon>
        <taxon>Rickettsiaceae</taxon>
        <taxon>Rickettsieae</taxon>
        <taxon>Rickettsia</taxon>
        <taxon>spotted fever group</taxon>
    </lineage>
</organism>
<dbReference type="EMBL" id="AE006914">
    <property type="protein sequence ID" value="AAL03376.1"/>
    <property type="molecule type" value="Genomic_DNA"/>
</dbReference>
<dbReference type="PIR" id="F97804">
    <property type="entry name" value="F97804"/>
</dbReference>
<dbReference type="SMR" id="Q92HD3"/>
<dbReference type="KEGG" id="rco:RC0838"/>
<dbReference type="HOGENOM" id="CLU_2331870_0_0_5"/>
<dbReference type="Proteomes" id="UP000000816">
    <property type="component" value="Chromosome"/>
</dbReference>
<dbReference type="Gene3D" id="3.90.226.10">
    <property type="entry name" value="2-enoyl-CoA Hydratase, Chain A, domain 1"/>
    <property type="match status" value="1"/>
</dbReference>
<dbReference type="InterPro" id="IPR029045">
    <property type="entry name" value="ClpP/crotonase-like_dom_sf"/>
</dbReference>
<dbReference type="SUPFAM" id="SSF52096">
    <property type="entry name" value="ClpP/crotonase"/>
    <property type="match status" value="1"/>
</dbReference>
<name>Y838_RICCN</name>
<accession>Q92HD3</accession>
<proteinExistence type="uncertain"/>
<protein>
    <recommendedName>
        <fullName>Putative uncharacterized protein RC0838</fullName>
    </recommendedName>
</protein>
<reference key="1">
    <citation type="journal article" date="2001" name="Science">
        <title>Mechanisms of evolution in Rickettsia conorii and R. prowazekii.</title>
        <authorList>
            <person name="Ogata H."/>
            <person name="Audic S."/>
            <person name="Renesto-Audiffren P."/>
            <person name="Fournier P.-E."/>
            <person name="Barbe V."/>
            <person name="Samson D."/>
            <person name="Roux V."/>
            <person name="Cossart P."/>
            <person name="Weissenbach J."/>
            <person name="Claverie J.-M."/>
            <person name="Raoult D."/>
        </authorList>
    </citation>
    <scope>NUCLEOTIDE SEQUENCE [LARGE SCALE GENOMIC DNA]</scope>
    <source>
        <strain>ATCC VR-613 / Malish 7</strain>
    </source>
</reference>